<accession>Q8K1S7</accession>
<accession>Q0VBR6</accession>
<organism evidence="12">
    <name type="scientific">Mus musculus</name>
    <name type="common">Mouse</name>
    <dbReference type="NCBI Taxonomy" id="10090"/>
    <lineage>
        <taxon>Eukaryota</taxon>
        <taxon>Metazoa</taxon>
        <taxon>Chordata</taxon>
        <taxon>Craniata</taxon>
        <taxon>Vertebrata</taxon>
        <taxon>Euteleostomi</taxon>
        <taxon>Mammalia</taxon>
        <taxon>Eutheria</taxon>
        <taxon>Euarchontoglires</taxon>
        <taxon>Glires</taxon>
        <taxon>Rodentia</taxon>
        <taxon>Myomorpha</taxon>
        <taxon>Muroidea</taxon>
        <taxon>Muridae</taxon>
        <taxon>Murinae</taxon>
        <taxon>Mus</taxon>
        <taxon>Mus</taxon>
    </lineage>
</organism>
<name>KREM2_MOUSE</name>
<dbReference type="EMBL" id="AJ457192">
    <property type="protein sequence ID" value="CAD29805.1"/>
    <property type="molecule type" value="mRNA"/>
</dbReference>
<dbReference type="EMBL" id="BC120532">
    <property type="protein sequence ID" value="AAI20533.1"/>
    <property type="molecule type" value="mRNA"/>
</dbReference>
<dbReference type="EMBL" id="BC125438">
    <property type="protein sequence ID" value="AAI25439.1"/>
    <property type="molecule type" value="mRNA"/>
</dbReference>
<dbReference type="CCDS" id="CCDS28462.1"/>
<dbReference type="RefSeq" id="NP_082692.1">
    <property type="nucleotide sequence ID" value="NM_028416.2"/>
</dbReference>
<dbReference type="RefSeq" id="XP_006525047.1">
    <property type="nucleotide sequence ID" value="XM_006524984.4"/>
</dbReference>
<dbReference type="RefSeq" id="XP_036016689.1">
    <property type="nucleotide sequence ID" value="XM_036160796.1"/>
</dbReference>
<dbReference type="SMR" id="Q8K1S7"/>
<dbReference type="BioGRID" id="215713">
    <property type="interactions" value="1"/>
</dbReference>
<dbReference type="CORUM" id="Q8K1S7"/>
<dbReference type="FunCoup" id="Q8K1S7">
    <property type="interactions" value="590"/>
</dbReference>
<dbReference type="STRING" id="10090.ENSMUSP00000046369"/>
<dbReference type="GlyCosmos" id="Q8K1S7">
    <property type="glycosylation" value="4 sites, No reported glycans"/>
</dbReference>
<dbReference type="GlyGen" id="Q8K1S7">
    <property type="glycosylation" value="4 sites"/>
</dbReference>
<dbReference type="PhosphoSitePlus" id="Q8K1S7"/>
<dbReference type="PaxDb" id="10090-ENSMUSP00000046369"/>
<dbReference type="Antibodypedia" id="1159">
    <property type="antibodies" value="122 antibodies from 28 providers"/>
</dbReference>
<dbReference type="DNASU" id="73016"/>
<dbReference type="Ensembl" id="ENSMUST00000046525.10">
    <property type="protein sequence ID" value="ENSMUSP00000046369.9"/>
    <property type="gene ID" value="ENSMUSG00000040680.10"/>
</dbReference>
<dbReference type="GeneID" id="73016"/>
<dbReference type="KEGG" id="mmu:73016"/>
<dbReference type="UCSC" id="uc008atd.1">
    <property type="organism name" value="mouse"/>
</dbReference>
<dbReference type="AGR" id="MGI:1920266"/>
<dbReference type="CTD" id="79412"/>
<dbReference type="MGI" id="MGI:1920266">
    <property type="gene designation" value="Kremen2"/>
</dbReference>
<dbReference type="VEuPathDB" id="HostDB:ENSMUSG00000040680"/>
<dbReference type="eggNOG" id="KOG4157">
    <property type="taxonomic scope" value="Eukaryota"/>
</dbReference>
<dbReference type="GeneTree" id="ENSGT00940000162126"/>
<dbReference type="HOGENOM" id="CLU_047976_0_0_1"/>
<dbReference type="InParanoid" id="Q8K1S7"/>
<dbReference type="OMA" id="RNCSWVV"/>
<dbReference type="OrthoDB" id="431034at2759"/>
<dbReference type="PhylomeDB" id="Q8K1S7"/>
<dbReference type="TreeFam" id="TF331319"/>
<dbReference type="Reactome" id="R-MMU-3772470">
    <property type="pathway name" value="Negative regulation of TCF-dependent signaling by WNT ligand antagonists"/>
</dbReference>
<dbReference type="BioGRID-ORCS" id="73016">
    <property type="hits" value="5 hits in 80 CRISPR screens"/>
</dbReference>
<dbReference type="PRO" id="PR:Q8K1S7"/>
<dbReference type="Proteomes" id="UP000000589">
    <property type="component" value="Chromosome 17"/>
</dbReference>
<dbReference type="RNAct" id="Q8K1S7">
    <property type="molecule type" value="protein"/>
</dbReference>
<dbReference type="Bgee" id="ENSMUSG00000040680">
    <property type="expression patterns" value="Expressed in skin epidermis and 54 other cell types or tissues"/>
</dbReference>
<dbReference type="GO" id="GO:0016020">
    <property type="term" value="C:membrane"/>
    <property type="evidence" value="ECO:0007669"/>
    <property type="project" value="UniProtKB-SubCell"/>
</dbReference>
<dbReference type="GO" id="GO:0060173">
    <property type="term" value="P:limb development"/>
    <property type="evidence" value="ECO:0000315"/>
    <property type="project" value="UniProtKB"/>
</dbReference>
<dbReference type="GO" id="GO:0030279">
    <property type="term" value="P:negative regulation of ossification"/>
    <property type="evidence" value="ECO:0000315"/>
    <property type="project" value="UniProtKB"/>
</dbReference>
<dbReference type="GO" id="GO:0016055">
    <property type="term" value="P:Wnt signaling pathway"/>
    <property type="evidence" value="ECO:0007669"/>
    <property type="project" value="UniProtKB-KW"/>
</dbReference>
<dbReference type="CDD" id="cd00041">
    <property type="entry name" value="CUB"/>
    <property type="match status" value="1"/>
</dbReference>
<dbReference type="CDD" id="cd00108">
    <property type="entry name" value="KR"/>
    <property type="match status" value="1"/>
</dbReference>
<dbReference type="FunFam" id="2.40.20.10:FF:000006">
    <property type="entry name" value="Kremen protein 2"/>
    <property type="match status" value="1"/>
</dbReference>
<dbReference type="FunFam" id="2.60.120.290:FF:000037">
    <property type="entry name" value="Kremen protein 2"/>
    <property type="match status" value="1"/>
</dbReference>
<dbReference type="Gene3D" id="2.40.20.10">
    <property type="entry name" value="Plasminogen Kringle 4"/>
    <property type="match status" value="1"/>
</dbReference>
<dbReference type="Gene3D" id="2.60.120.290">
    <property type="entry name" value="Spermadhesin, CUB domain"/>
    <property type="match status" value="1"/>
</dbReference>
<dbReference type="InterPro" id="IPR000859">
    <property type="entry name" value="CUB_dom"/>
</dbReference>
<dbReference type="InterPro" id="IPR017076">
    <property type="entry name" value="Kremen"/>
</dbReference>
<dbReference type="InterPro" id="IPR051836">
    <property type="entry name" value="Kremen_rcpt"/>
</dbReference>
<dbReference type="InterPro" id="IPR000001">
    <property type="entry name" value="Kringle"/>
</dbReference>
<dbReference type="InterPro" id="IPR013806">
    <property type="entry name" value="Kringle-like"/>
</dbReference>
<dbReference type="InterPro" id="IPR018056">
    <property type="entry name" value="Kringle_CS"/>
</dbReference>
<dbReference type="InterPro" id="IPR038178">
    <property type="entry name" value="Kringle_sf"/>
</dbReference>
<dbReference type="InterPro" id="IPR035914">
    <property type="entry name" value="Sperma_CUB_dom_sf"/>
</dbReference>
<dbReference type="InterPro" id="IPR002889">
    <property type="entry name" value="WSC_carb-bd"/>
</dbReference>
<dbReference type="PANTHER" id="PTHR24269">
    <property type="entry name" value="KREMEN PROTEIN"/>
    <property type="match status" value="1"/>
</dbReference>
<dbReference type="PANTHER" id="PTHR24269:SF15">
    <property type="entry name" value="KREMEN PROTEIN 2"/>
    <property type="match status" value="1"/>
</dbReference>
<dbReference type="Pfam" id="PF00431">
    <property type="entry name" value="CUB"/>
    <property type="match status" value="1"/>
</dbReference>
<dbReference type="Pfam" id="PF00051">
    <property type="entry name" value="Kringle"/>
    <property type="match status" value="1"/>
</dbReference>
<dbReference type="Pfam" id="PF01822">
    <property type="entry name" value="WSC"/>
    <property type="match status" value="1"/>
</dbReference>
<dbReference type="PIRSF" id="PIRSF036961">
    <property type="entry name" value="Kremen"/>
    <property type="match status" value="1"/>
</dbReference>
<dbReference type="PRINTS" id="PR00018">
    <property type="entry name" value="KRINGLE"/>
</dbReference>
<dbReference type="SMART" id="SM00042">
    <property type="entry name" value="CUB"/>
    <property type="match status" value="1"/>
</dbReference>
<dbReference type="SMART" id="SM00130">
    <property type="entry name" value="KR"/>
    <property type="match status" value="1"/>
</dbReference>
<dbReference type="SMART" id="SM00321">
    <property type="entry name" value="WSC"/>
    <property type="match status" value="1"/>
</dbReference>
<dbReference type="SUPFAM" id="SSF57440">
    <property type="entry name" value="Kringle-like"/>
    <property type="match status" value="1"/>
</dbReference>
<dbReference type="SUPFAM" id="SSF49854">
    <property type="entry name" value="Spermadhesin, CUB domain"/>
    <property type="match status" value="1"/>
</dbReference>
<dbReference type="PROSITE" id="PS01180">
    <property type="entry name" value="CUB"/>
    <property type="match status" value="1"/>
</dbReference>
<dbReference type="PROSITE" id="PS00021">
    <property type="entry name" value="KRINGLE_1"/>
    <property type="match status" value="1"/>
</dbReference>
<dbReference type="PROSITE" id="PS50070">
    <property type="entry name" value="KRINGLE_2"/>
    <property type="match status" value="1"/>
</dbReference>
<dbReference type="PROSITE" id="PS51212">
    <property type="entry name" value="WSC"/>
    <property type="match status" value="1"/>
</dbReference>
<protein>
    <recommendedName>
        <fullName>Kremen protein 2</fullName>
    </recommendedName>
    <alternativeName>
        <fullName>Dickkopf receptor 2</fullName>
    </alternativeName>
    <alternativeName>
        <fullName>Kringle domain-containing transmembrane protein 2</fullName>
    </alternativeName>
    <alternativeName>
        <fullName>Kringle-containing protein marking the eye and the nose</fullName>
    </alternativeName>
</protein>
<gene>
    <name type="primary">Kremen2</name>
</gene>
<evidence type="ECO:0000250" key="1"/>
<evidence type="ECO:0000255" key="2"/>
<evidence type="ECO:0000255" key="3">
    <source>
        <dbReference type="PROSITE-ProRule" id="PRU00059"/>
    </source>
</evidence>
<evidence type="ECO:0000255" key="4">
    <source>
        <dbReference type="PROSITE-ProRule" id="PRU00121"/>
    </source>
</evidence>
<evidence type="ECO:0000255" key="5">
    <source>
        <dbReference type="PROSITE-ProRule" id="PRU00558"/>
    </source>
</evidence>
<evidence type="ECO:0000256" key="6">
    <source>
        <dbReference type="SAM" id="MobiDB-lite"/>
    </source>
</evidence>
<evidence type="ECO:0000269" key="7">
    <source>
    </source>
</evidence>
<evidence type="ECO:0000269" key="8">
    <source>
    </source>
</evidence>
<evidence type="ECO:0000269" key="9">
    <source>
    </source>
</evidence>
<evidence type="ECO:0000269" key="10">
    <source>
    </source>
</evidence>
<evidence type="ECO:0000305" key="11"/>
<evidence type="ECO:0000312" key="12">
    <source>
        <dbReference type="EMBL" id="CAD29805.1"/>
    </source>
</evidence>
<feature type="signal peptide" evidence="2">
    <location>
        <begin position="1"/>
        <end position="24"/>
    </location>
</feature>
<feature type="chain" id="PRO_0000021569" description="Kremen protein 2">
    <location>
        <begin position="25"/>
        <end position="461"/>
    </location>
</feature>
<feature type="topological domain" description="Extracellular" evidence="2">
    <location>
        <begin position="25"/>
        <end position="363"/>
    </location>
</feature>
<feature type="transmembrane region" description="Helical" evidence="2">
    <location>
        <begin position="364"/>
        <end position="386"/>
    </location>
</feature>
<feature type="topological domain" description="Cytoplasmic" evidence="2">
    <location>
        <begin position="387"/>
        <end position="461"/>
    </location>
</feature>
<feature type="domain" description="Kringle" evidence="4">
    <location>
        <begin position="34"/>
        <end position="118"/>
    </location>
</feature>
<feature type="domain" description="WSC" evidence="5 11">
    <location>
        <begin position="120"/>
        <end position="214"/>
    </location>
</feature>
<feature type="domain" description="CUB" evidence="3 11">
    <location>
        <begin position="218"/>
        <end position="325"/>
    </location>
</feature>
<feature type="region of interest" description="Disordered" evidence="6">
    <location>
        <begin position="329"/>
        <end position="357"/>
    </location>
</feature>
<feature type="region of interest" description="Disordered" evidence="6">
    <location>
        <begin position="429"/>
        <end position="452"/>
    </location>
</feature>
<feature type="glycosylation site" description="N-linked (GlcNAc...) asparagine" evidence="2">
    <location>
        <position position="48"/>
    </location>
</feature>
<feature type="glycosylation site" description="N-linked (GlcNAc...) asparagine" evidence="2">
    <location>
        <position position="221"/>
    </location>
</feature>
<feature type="glycosylation site" description="N-linked (GlcNAc...) asparagine" evidence="2">
    <location>
        <position position="243"/>
    </location>
</feature>
<feature type="glycosylation site" description="N-linked (GlcNAc...) asparagine" evidence="2">
    <location>
        <position position="350"/>
    </location>
</feature>
<feature type="disulfide bond" evidence="1">
    <location>
        <begin position="35"/>
        <end position="118"/>
    </location>
</feature>
<feature type="disulfide bond" evidence="1">
    <location>
        <begin position="59"/>
        <end position="99"/>
    </location>
</feature>
<feature type="disulfide bond" evidence="1">
    <location>
        <begin position="88"/>
        <end position="113"/>
    </location>
</feature>
<feature type="disulfide bond" evidence="1">
    <location>
        <begin position="218"/>
        <end position="244"/>
    </location>
</feature>
<proteinExistence type="evidence at protein level"/>
<reference evidence="11" key="1">
    <citation type="journal article" date="2002" name="Nature">
        <title>Kremen proteins are Dickkopf receptors that regulate Wnt/beta-catenin signalling.</title>
        <authorList>
            <person name="Mao B."/>
            <person name="Wu W."/>
            <person name="Davidson G."/>
            <person name="Marhold J."/>
            <person name="Li M."/>
            <person name="Mechler B.M."/>
            <person name="Delius H."/>
            <person name="Hoppe D."/>
            <person name="Stannek P."/>
            <person name="Walter C."/>
            <person name="Glinka A."/>
            <person name="Niehrs C."/>
        </authorList>
    </citation>
    <scope>NUCLEOTIDE SEQUENCE [MRNA]</scope>
    <scope>FUNCTION</scope>
    <scope>IDENTIFICATION IN A TERNARY COMPLEX WITH DKK1 AND LRP6</scope>
    <source>
        <strain>C57BL/6J</strain>
    </source>
</reference>
<reference key="2">
    <citation type="journal article" date="2004" name="Genome Res.">
        <title>The status, quality, and expansion of the NIH full-length cDNA project: the Mammalian Gene Collection (MGC).</title>
        <authorList>
            <consortium name="The MGC Project Team"/>
        </authorList>
    </citation>
    <scope>NUCLEOTIDE SEQUENCE [LARGE SCALE MRNA]</scope>
    <source>
        <tissue>Brain</tissue>
    </source>
</reference>
<reference key="3">
    <citation type="journal article" date="2006" name="J. Biol. Chem.">
        <title>The MRH protein Erlectin is a member of the endoplasmic reticulum synexpression group and functions in N-glycan recognition.</title>
        <authorList>
            <person name="Cruciat C.-M."/>
            <person name="Hassler C."/>
            <person name="Niehrs C."/>
        </authorList>
    </citation>
    <scope>INTERACTION WITH ERLEC1</scope>
</reference>
<reference key="4">
    <citation type="journal article" date="2008" name="Mol. Cell. Biol.">
        <title>Targeted disruption of the Wnt regulator Kremen induces limb defects and high bone density.</title>
        <authorList>
            <person name="Ellwanger K."/>
            <person name="Saito H."/>
            <person name="Clement-Lacroix P."/>
            <person name="Maltry N."/>
            <person name="Niedermeyer J."/>
            <person name="Lee W.K."/>
            <person name="Baron R."/>
            <person name="Rawadi G."/>
            <person name="Westphal H."/>
            <person name="Niehrs C."/>
        </authorList>
    </citation>
    <scope>FUNCTION</scope>
    <scope>DEVELOPMENTAL STAGE</scope>
    <scope>DISRUPTION PHENOTYPE</scope>
</reference>
<reference key="5">
    <citation type="journal article" date="2016" name="Cell Death Differ.">
        <title>Kremen1 and Dickkopf1 control cell survival in a Wnt-independent manner.</title>
        <authorList>
            <person name="Causeret F."/>
            <person name="Sumia I."/>
            <person name="Pierani A."/>
        </authorList>
    </citation>
    <scope>DEVELOPMENTAL STAGE</scope>
</reference>
<keyword id="KW-1015">Disulfide bond</keyword>
<keyword id="KW-0325">Glycoprotein</keyword>
<keyword id="KW-0420">Kringle</keyword>
<keyword id="KW-0472">Membrane</keyword>
<keyword id="KW-1185">Reference proteome</keyword>
<keyword id="KW-0732">Signal</keyword>
<keyword id="KW-0812">Transmembrane</keyword>
<keyword id="KW-1133">Transmembrane helix</keyword>
<keyword id="KW-0879">Wnt signaling pathway</keyword>
<comment type="function">
    <text evidence="7 9">Receptor for Dickkopf proteins. Cooperates with DKK1/2 to inhibit Wnt/beta-catenin signaling by promoting the endocytosis of Wnt receptors LRP5 and LRP6 (PubMed:12050670). Plays a role in limb development; attenuates Wnt signaling in the developing limb to allow normal limb patterning and can also negatively regulate bone formation (PubMed:18505822).</text>
</comment>
<comment type="subunit">
    <text evidence="7 8">Interacts with ERLEC1 (PubMed:16531414). Forms a ternary complex with DKK1 and LRP6 (PubMed:12050670).</text>
</comment>
<comment type="subcellular location">
    <subcellularLocation>
        <location evidence="11">Membrane</location>
        <topology evidence="11">Single-pass type I membrane protein</topology>
    </subcellularLocation>
</comment>
<comment type="developmental stage">
    <text evidence="10">Expressed in the developing brain and developing limb buds.</text>
</comment>
<comment type="domain">
    <text evidence="8">Binding to ERLEC1 is mediated by the oligosaccharides linked to the kringle domain.</text>
</comment>
<comment type="disruption phenotype">
    <text evidence="9">Animals with a double knockout of KREM1 and KREM2 exhibit enhanced Wnt signaling accompanied by ectopic postaxial forelimb digits and expanded apical ectodermal ridges. They also exhibit increased bone volume and bone formation rates. Triple knockout mice KREM1/KREM2/DKK1 exhibit enhanced growth of ectopic digits.</text>
</comment>
<sequence length="461" mass="49170">MGTPHLQGFLLLFPLLLRLHGASAGSLHSPGLSECFQVNGADYRGHQNYTGPRGAGRPCLFWDQTQQHSYSSASDPQGRWGLGAHNFCRNPDGDVQPWCYVAETEEGIYWRYCDIPTCHMPGYLGCFVDSGAPPALSGPSGTSTKLTVQVCLRFCRMKGYQLAGVEAGYACFCGSESDLARGRPAPATDCDQICFGHPGQLCGGDGRLGIYEVSVGSCQGNWSAPQGVIYSPDFPDEYGPDRNCSWVLGQLGAVLELTFRLFELADSRDRLELRDVSSGNLLRAFDGAHPPPPGPLRLRTAALLLTFRSDARGHAQGFALTYRGLQDTVEGRASPEDSTESLAGDPDGANASCSPKPGAAQASIGARVFSTVTAFSVLLLLLLSLLRLLRRRSCLLAPGKGSLAMGPSRGPGRSWAVWYRRPRGVALPCPPGDSQAEGPAAGYRPLSASSQSSLRSLVSAL</sequence>